<accession>A1RR78</accession>
<dbReference type="EC" id="4.3.2.1" evidence="1"/>
<dbReference type="EMBL" id="CP000504">
    <property type="protein sequence ID" value="ABL87460.1"/>
    <property type="molecule type" value="Genomic_DNA"/>
</dbReference>
<dbReference type="RefSeq" id="WP_011762037.1">
    <property type="nucleotide sequence ID" value="NC_008701.1"/>
</dbReference>
<dbReference type="SMR" id="A1RR78"/>
<dbReference type="STRING" id="384616.Pisl_0281"/>
<dbReference type="GeneID" id="4616786"/>
<dbReference type="KEGG" id="pis:Pisl_0281"/>
<dbReference type="eggNOG" id="arCOG01748">
    <property type="taxonomic scope" value="Archaea"/>
</dbReference>
<dbReference type="HOGENOM" id="CLU_027272_2_0_2"/>
<dbReference type="OrthoDB" id="27337at2157"/>
<dbReference type="UniPathway" id="UPA00068">
    <property type="reaction ID" value="UER00114"/>
</dbReference>
<dbReference type="Proteomes" id="UP000002595">
    <property type="component" value="Chromosome"/>
</dbReference>
<dbReference type="GO" id="GO:0005829">
    <property type="term" value="C:cytosol"/>
    <property type="evidence" value="ECO:0007669"/>
    <property type="project" value="TreeGrafter"/>
</dbReference>
<dbReference type="GO" id="GO:0004056">
    <property type="term" value="F:argininosuccinate lyase activity"/>
    <property type="evidence" value="ECO:0007669"/>
    <property type="project" value="UniProtKB-UniRule"/>
</dbReference>
<dbReference type="GO" id="GO:0042450">
    <property type="term" value="P:arginine biosynthetic process via ornithine"/>
    <property type="evidence" value="ECO:0007669"/>
    <property type="project" value="InterPro"/>
</dbReference>
<dbReference type="GO" id="GO:0006526">
    <property type="term" value="P:L-arginine biosynthetic process"/>
    <property type="evidence" value="ECO:0007669"/>
    <property type="project" value="UniProtKB-UniRule"/>
</dbReference>
<dbReference type="Gene3D" id="1.10.40.30">
    <property type="entry name" value="Fumarase/aspartase (C-terminal domain)"/>
    <property type="match status" value="1"/>
</dbReference>
<dbReference type="Gene3D" id="1.20.200.10">
    <property type="entry name" value="Fumarase/aspartase (Central domain)"/>
    <property type="match status" value="1"/>
</dbReference>
<dbReference type="Gene3D" id="1.10.275.10">
    <property type="entry name" value="Fumarase/aspartase (N-terminal domain)"/>
    <property type="match status" value="1"/>
</dbReference>
<dbReference type="HAMAP" id="MF_00006">
    <property type="entry name" value="Arg_succ_lyase"/>
    <property type="match status" value="1"/>
</dbReference>
<dbReference type="InterPro" id="IPR009049">
    <property type="entry name" value="Argininosuccinate_lyase"/>
</dbReference>
<dbReference type="InterPro" id="IPR024083">
    <property type="entry name" value="Fumarase/histidase_N"/>
</dbReference>
<dbReference type="InterPro" id="IPR000362">
    <property type="entry name" value="Fumarate_lyase_fam"/>
</dbReference>
<dbReference type="InterPro" id="IPR022761">
    <property type="entry name" value="Fumarate_lyase_N"/>
</dbReference>
<dbReference type="InterPro" id="IPR008948">
    <property type="entry name" value="L-Aspartase-like"/>
</dbReference>
<dbReference type="NCBIfam" id="TIGR00838">
    <property type="entry name" value="argH"/>
    <property type="match status" value="1"/>
</dbReference>
<dbReference type="PANTHER" id="PTHR43814">
    <property type="entry name" value="ARGININOSUCCINATE LYASE"/>
    <property type="match status" value="1"/>
</dbReference>
<dbReference type="PANTHER" id="PTHR43814:SF1">
    <property type="entry name" value="ARGININOSUCCINATE LYASE"/>
    <property type="match status" value="1"/>
</dbReference>
<dbReference type="Pfam" id="PF00206">
    <property type="entry name" value="Lyase_1"/>
    <property type="match status" value="1"/>
</dbReference>
<dbReference type="PRINTS" id="PR00145">
    <property type="entry name" value="ARGSUCLYASE"/>
</dbReference>
<dbReference type="PRINTS" id="PR00149">
    <property type="entry name" value="FUMRATELYASE"/>
</dbReference>
<dbReference type="SUPFAM" id="SSF48557">
    <property type="entry name" value="L-aspartase-like"/>
    <property type="match status" value="1"/>
</dbReference>
<protein>
    <recommendedName>
        <fullName evidence="1">Argininosuccinate lyase</fullName>
        <shortName evidence="1">ASAL</shortName>
        <ecNumber evidence="1">4.3.2.1</ecNumber>
    </recommendedName>
    <alternativeName>
        <fullName evidence="1">Arginosuccinase</fullName>
    </alternativeName>
</protein>
<keyword id="KW-0028">Amino-acid biosynthesis</keyword>
<keyword id="KW-0055">Arginine biosynthesis</keyword>
<keyword id="KW-0963">Cytoplasm</keyword>
<keyword id="KW-0456">Lyase</keyword>
<name>ARLY_PYRIL</name>
<organism>
    <name type="scientific">Pyrobaculum islandicum (strain DSM 4184 / JCM 9189 / GEO3)</name>
    <dbReference type="NCBI Taxonomy" id="384616"/>
    <lineage>
        <taxon>Archaea</taxon>
        <taxon>Thermoproteota</taxon>
        <taxon>Thermoprotei</taxon>
        <taxon>Thermoproteales</taxon>
        <taxon>Thermoproteaceae</taxon>
        <taxon>Pyrobaculum</taxon>
    </lineage>
</organism>
<feature type="chain" id="PRO_1000089106" description="Argininosuccinate lyase">
    <location>
        <begin position="1"/>
        <end position="429"/>
    </location>
</feature>
<reference key="1">
    <citation type="submission" date="2006-12" db="EMBL/GenBank/DDBJ databases">
        <title>Complete sequence of Pyrobaculum islandicum DSM 4184.</title>
        <authorList>
            <person name="Copeland A."/>
            <person name="Lucas S."/>
            <person name="Lapidus A."/>
            <person name="Barry K."/>
            <person name="Detter J.C."/>
            <person name="Glavina del Rio T."/>
            <person name="Dalin E."/>
            <person name="Tice H."/>
            <person name="Pitluck S."/>
            <person name="Meincke L."/>
            <person name="Brettin T."/>
            <person name="Bruce D."/>
            <person name="Han C."/>
            <person name="Tapia R."/>
            <person name="Gilna P."/>
            <person name="Schmutz J."/>
            <person name="Larimer F."/>
            <person name="Land M."/>
            <person name="Hauser L."/>
            <person name="Kyrpides N."/>
            <person name="Mikhailova N."/>
            <person name="Cozen A.E."/>
            <person name="Fitz-Gibbon S.T."/>
            <person name="House C.H."/>
            <person name="Saltikov C."/>
            <person name="Lowe T."/>
            <person name="Richardson P."/>
        </authorList>
    </citation>
    <scope>NUCLEOTIDE SEQUENCE [LARGE SCALE GENOMIC DNA]</scope>
    <source>
        <strain>DSM 4184 / JCM 9189 / GEO3</strain>
    </source>
</reference>
<gene>
    <name evidence="1" type="primary">argH</name>
    <name type="ordered locus">Pisl_0281</name>
</gene>
<proteinExistence type="inferred from homology"/>
<evidence type="ECO:0000255" key="1">
    <source>
        <dbReference type="HAMAP-Rule" id="MF_00006"/>
    </source>
</evidence>
<comment type="catalytic activity">
    <reaction evidence="1">
        <text>2-(N(omega)-L-arginino)succinate = fumarate + L-arginine</text>
        <dbReference type="Rhea" id="RHEA:24020"/>
        <dbReference type="ChEBI" id="CHEBI:29806"/>
        <dbReference type="ChEBI" id="CHEBI:32682"/>
        <dbReference type="ChEBI" id="CHEBI:57472"/>
        <dbReference type="EC" id="4.3.2.1"/>
    </reaction>
</comment>
<comment type="pathway">
    <text evidence="1">Amino-acid biosynthesis; L-arginine biosynthesis; L-arginine from L-ornithine and carbamoyl phosphate: step 3/3.</text>
</comment>
<comment type="subcellular location">
    <subcellularLocation>
        <location evidence="1">Cytoplasm</location>
    </subcellularLocation>
</comment>
<comment type="similarity">
    <text evidence="1">Belongs to the lyase 1 family. Argininosuccinate lyase subfamily.</text>
</comment>
<sequence length="429" mass="47481">MSFYRSWIGEEGELIKRYTSSIKDDVEIAEEVIKVMEAHVKHLAEVGIMPKEAADAILKTLKEATPEQLLSSEFEDIHEALEKWLIDRLGEETAGWVGLGRSRNDHVAAAIRLAALRKASALRKNVEKMRCILAKKALEYADCAMPSFTHFQPAQAITFGHYLLAVDELAAEFLHVLKAVEKLLKRSPLGAGPAGGTRTPIDRERLAKLAGFEDVVENALYASGSRFFALALASAVVSFLTELSRTVDDLIRWNSPLVGYVAAPDSHVSTSSIMPHKRNLVTLEVFRARAAEALGHLTALNAVVMKIGLGYSLDLQEATRHLWAVLNMATEGVEIFIDFLEKMSFNCVKAREDAERYHSTSSDTAETIALSGVPFRKAYFQLAKEIKEGTARLMSIEEALQRPTRGSANPEEVKKAASTRLVFCREKPL</sequence>